<gene>
    <name evidence="1" type="primary">anmK</name>
    <name type="ordered locus">Sde_1086</name>
</gene>
<feature type="chain" id="PRO_0000250051" description="Anhydro-N-acetylmuramic acid kinase">
    <location>
        <begin position="1"/>
        <end position="371"/>
    </location>
</feature>
<feature type="binding site" evidence="1">
    <location>
        <begin position="12"/>
        <end position="19"/>
    </location>
    <ligand>
        <name>ATP</name>
        <dbReference type="ChEBI" id="CHEBI:30616"/>
    </ligand>
</feature>
<organism>
    <name type="scientific">Saccharophagus degradans (strain 2-40 / ATCC 43961 / DSM 17024)</name>
    <dbReference type="NCBI Taxonomy" id="203122"/>
    <lineage>
        <taxon>Bacteria</taxon>
        <taxon>Pseudomonadati</taxon>
        <taxon>Pseudomonadota</taxon>
        <taxon>Gammaproteobacteria</taxon>
        <taxon>Cellvibrionales</taxon>
        <taxon>Cellvibrionaceae</taxon>
        <taxon>Saccharophagus</taxon>
    </lineage>
</organism>
<proteinExistence type="inferred from homology"/>
<evidence type="ECO:0000255" key="1">
    <source>
        <dbReference type="HAMAP-Rule" id="MF_01270"/>
    </source>
</evidence>
<reference key="1">
    <citation type="journal article" date="2008" name="PLoS Genet.">
        <title>Complete genome sequence of the complex carbohydrate-degrading marine bacterium, Saccharophagus degradans strain 2-40 T.</title>
        <authorList>
            <person name="Weiner R.M."/>
            <person name="Taylor L.E. II"/>
            <person name="Henrissat B."/>
            <person name="Hauser L."/>
            <person name="Land M."/>
            <person name="Coutinho P.M."/>
            <person name="Rancurel C."/>
            <person name="Saunders E.H."/>
            <person name="Longmire A.G."/>
            <person name="Zhang H."/>
            <person name="Bayer E.A."/>
            <person name="Gilbert H.J."/>
            <person name="Larimer F."/>
            <person name="Zhulin I.B."/>
            <person name="Ekborg N.A."/>
            <person name="Lamed R."/>
            <person name="Richardson P.M."/>
            <person name="Borovok I."/>
            <person name="Hutcheson S."/>
        </authorList>
    </citation>
    <scope>NUCLEOTIDE SEQUENCE [LARGE SCALE GENOMIC DNA]</scope>
    <source>
        <strain>2-40 / ATCC 43961 / DSM 17024</strain>
    </source>
</reference>
<protein>
    <recommendedName>
        <fullName evidence="1">Anhydro-N-acetylmuramic acid kinase</fullName>
        <ecNumber evidence="1">2.7.1.170</ecNumber>
    </recommendedName>
    <alternativeName>
        <fullName evidence="1">AnhMurNAc kinase</fullName>
    </alternativeName>
</protein>
<comment type="function">
    <text evidence="1">Catalyzes the specific phosphorylation of 1,6-anhydro-N-acetylmuramic acid (anhMurNAc) with the simultaneous cleavage of the 1,6-anhydro ring, generating MurNAc-6-P. Is required for the utilization of anhMurNAc either imported from the medium or derived from its own cell wall murein, and thus plays a role in cell wall recycling.</text>
</comment>
<comment type="catalytic activity">
    <reaction evidence="1">
        <text>1,6-anhydro-N-acetyl-beta-muramate + ATP + H2O = N-acetyl-D-muramate 6-phosphate + ADP + H(+)</text>
        <dbReference type="Rhea" id="RHEA:24952"/>
        <dbReference type="ChEBI" id="CHEBI:15377"/>
        <dbReference type="ChEBI" id="CHEBI:15378"/>
        <dbReference type="ChEBI" id="CHEBI:30616"/>
        <dbReference type="ChEBI" id="CHEBI:58690"/>
        <dbReference type="ChEBI" id="CHEBI:58722"/>
        <dbReference type="ChEBI" id="CHEBI:456216"/>
        <dbReference type="EC" id="2.7.1.170"/>
    </reaction>
</comment>
<comment type="pathway">
    <text evidence="1">Amino-sugar metabolism; 1,6-anhydro-N-acetylmuramate degradation.</text>
</comment>
<comment type="pathway">
    <text evidence="1">Cell wall biogenesis; peptidoglycan recycling.</text>
</comment>
<comment type="similarity">
    <text evidence="1">Belongs to the anhydro-N-acetylmuramic acid kinase family.</text>
</comment>
<accession>Q21LT1</accession>
<keyword id="KW-0067">ATP-binding</keyword>
<keyword id="KW-0119">Carbohydrate metabolism</keyword>
<keyword id="KW-0418">Kinase</keyword>
<keyword id="KW-0547">Nucleotide-binding</keyword>
<keyword id="KW-1185">Reference proteome</keyword>
<keyword id="KW-0808">Transferase</keyword>
<sequence length="371" mass="39011">MKPSLFVGVMSGTSADGIDVALVDFSQATPALVGSESHAYPNHIREHVLGLCTPANNEIDALGQLDVELGKLYAHAVNSLLANTQTPAAQIQAIGCHGQTLRHRPLGSGYASPFSLQIGDPNTIAALTGIATVADFRRKDVALGGQGAPLVPAFHAAVFGSTTTDRCIANIGGIANITCLPANSHIAGYDTGPGNALMDAWIEANQGAKYDAGGAWAQTGKLNQPLLEILLQHPYFALPAPKSTGREDFNMTWLQACLNQTNLPLPPEDVQATLTELTAISLTDGVKRSCPNAELVICGGGAFNTALLERIQHHYPQKPTVTSQQLGIAPTWVEAMAFAWLAMRRLENQPGNVPAVTGASREAVLGGIYTP</sequence>
<name>ANMK_SACD2</name>
<dbReference type="EC" id="2.7.1.170" evidence="1"/>
<dbReference type="EMBL" id="CP000282">
    <property type="protein sequence ID" value="ABD80348.1"/>
    <property type="molecule type" value="Genomic_DNA"/>
</dbReference>
<dbReference type="RefSeq" id="WP_011467568.1">
    <property type="nucleotide sequence ID" value="NC_007912.1"/>
</dbReference>
<dbReference type="SMR" id="Q21LT1"/>
<dbReference type="STRING" id="203122.Sde_1086"/>
<dbReference type="GeneID" id="98612765"/>
<dbReference type="KEGG" id="sde:Sde_1086"/>
<dbReference type="eggNOG" id="COG2377">
    <property type="taxonomic scope" value="Bacteria"/>
</dbReference>
<dbReference type="HOGENOM" id="CLU_038782_0_0_6"/>
<dbReference type="OrthoDB" id="9763949at2"/>
<dbReference type="UniPathway" id="UPA00343"/>
<dbReference type="UniPathway" id="UPA00544"/>
<dbReference type="Proteomes" id="UP000001947">
    <property type="component" value="Chromosome"/>
</dbReference>
<dbReference type="GO" id="GO:0005524">
    <property type="term" value="F:ATP binding"/>
    <property type="evidence" value="ECO:0007669"/>
    <property type="project" value="UniProtKB-UniRule"/>
</dbReference>
<dbReference type="GO" id="GO:0016301">
    <property type="term" value="F:kinase activity"/>
    <property type="evidence" value="ECO:0007669"/>
    <property type="project" value="UniProtKB-KW"/>
</dbReference>
<dbReference type="GO" id="GO:0016773">
    <property type="term" value="F:phosphotransferase activity, alcohol group as acceptor"/>
    <property type="evidence" value="ECO:0007669"/>
    <property type="project" value="UniProtKB-UniRule"/>
</dbReference>
<dbReference type="GO" id="GO:0097175">
    <property type="term" value="P:1,6-anhydro-N-acetyl-beta-muramic acid catabolic process"/>
    <property type="evidence" value="ECO:0007669"/>
    <property type="project" value="UniProtKB-UniRule"/>
</dbReference>
<dbReference type="GO" id="GO:0006040">
    <property type="term" value="P:amino sugar metabolic process"/>
    <property type="evidence" value="ECO:0007669"/>
    <property type="project" value="InterPro"/>
</dbReference>
<dbReference type="GO" id="GO:0009254">
    <property type="term" value="P:peptidoglycan turnover"/>
    <property type="evidence" value="ECO:0007669"/>
    <property type="project" value="UniProtKB-UniRule"/>
</dbReference>
<dbReference type="CDD" id="cd24050">
    <property type="entry name" value="ASKHA_NBD_ANMK"/>
    <property type="match status" value="1"/>
</dbReference>
<dbReference type="Gene3D" id="3.30.420.40">
    <property type="match status" value="2"/>
</dbReference>
<dbReference type="HAMAP" id="MF_01270">
    <property type="entry name" value="AnhMurNAc_kinase"/>
    <property type="match status" value="1"/>
</dbReference>
<dbReference type="InterPro" id="IPR005338">
    <property type="entry name" value="Anhydro_N_Ac-Mur_kinase"/>
</dbReference>
<dbReference type="InterPro" id="IPR043129">
    <property type="entry name" value="ATPase_NBD"/>
</dbReference>
<dbReference type="NCBIfam" id="NF007139">
    <property type="entry name" value="PRK09585.1-3"/>
    <property type="match status" value="1"/>
</dbReference>
<dbReference type="NCBIfam" id="NF007148">
    <property type="entry name" value="PRK09585.3-2"/>
    <property type="match status" value="1"/>
</dbReference>
<dbReference type="PANTHER" id="PTHR30605">
    <property type="entry name" value="ANHYDRO-N-ACETYLMURAMIC ACID KINASE"/>
    <property type="match status" value="1"/>
</dbReference>
<dbReference type="PANTHER" id="PTHR30605:SF0">
    <property type="entry name" value="ANHYDRO-N-ACETYLMURAMIC ACID KINASE"/>
    <property type="match status" value="1"/>
</dbReference>
<dbReference type="Pfam" id="PF03702">
    <property type="entry name" value="AnmK"/>
    <property type="match status" value="1"/>
</dbReference>
<dbReference type="SUPFAM" id="SSF53067">
    <property type="entry name" value="Actin-like ATPase domain"/>
    <property type="match status" value="1"/>
</dbReference>